<proteinExistence type="evidence at protein level"/>
<reference key="1">
    <citation type="journal article" date="2001" name="FEBS Lett.">
        <title>Schizosaccharomyces pombe och1(+) encodes alpha-1,6-mannosyltransferase that is involved in outer chain elongation of N-linked oligosaccharides.</title>
        <authorList>
            <person name="Yoko-o T."/>
            <person name="Tsukahara K."/>
            <person name="Watanabe T."/>
            <person name="Hata-Sugi N."/>
            <person name="Yoshimatsu K."/>
            <person name="Nagasu T."/>
            <person name="Jigami Y."/>
        </authorList>
    </citation>
    <scope>NUCLEOTIDE SEQUENCE [GENOMIC DNA]</scope>
    <scope>CATALYTIC ACTIVITY</scope>
    <scope>FUNCTION</scope>
    <source>
        <strain>972 / ATCC 24843</strain>
    </source>
</reference>
<reference key="2">
    <citation type="journal article" date="2002" name="Nature">
        <title>The genome sequence of Schizosaccharomyces pombe.</title>
        <authorList>
            <person name="Wood V."/>
            <person name="Gwilliam R."/>
            <person name="Rajandream M.A."/>
            <person name="Lyne M.H."/>
            <person name="Lyne R."/>
            <person name="Stewart A."/>
            <person name="Sgouros J.G."/>
            <person name="Peat N."/>
            <person name="Hayles J."/>
            <person name="Baker S.G."/>
            <person name="Basham D."/>
            <person name="Bowman S."/>
            <person name="Brooks K."/>
            <person name="Brown D."/>
            <person name="Brown S."/>
            <person name="Chillingworth T."/>
            <person name="Churcher C.M."/>
            <person name="Collins M."/>
            <person name="Connor R."/>
            <person name="Cronin A."/>
            <person name="Davis P."/>
            <person name="Feltwell T."/>
            <person name="Fraser A."/>
            <person name="Gentles S."/>
            <person name="Goble A."/>
            <person name="Hamlin N."/>
            <person name="Harris D.E."/>
            <person name="Hidalgo J."/>
            <person name="Hodgson G."/>
            <person name="Holroyd S."/>
            <person name="Hornsby T."/>
            <person name="Howarth S."/>
            <person name="Huckle E.J."/>
            <person name="Hunt S."/>
            <person name="Jagels K."/>
            <person name="James K.D."/>
            <person name="Jones L."/>
            <person name="Jones M."/>
            <person name="Leather S."/>
            <person name="McDonald S."/>
            <person name="McLean J."/>
            <person name="Mooney P."/>
            <person name="Moule S."/>
            <person name="Mungall K.L."/>
            <person name="Murphy L.D."/>
            <person name="Niblett D."/>
            <person name="Odell C."/>
            <person name="Oliver K."/>
            <person name="O'Neil S."/>
            <person name="Pearson D."/>
            <person name="Quail M.A."/>
            <person name="Rabbinowitsch E."/>
            <person name="Rutherford K.M."/>
            <person name="Rutter S."/>
            <person name="Saunders D."/>
            <person name="Seeger K."/>
            <person name="Sharp S."/>
            <person name="Skelton J."/>
            <person name="Simmonds M.N."/>
            <person name="Squares R."/>
            <person name="Squares S."/>
            <person name="Stevens K."/>
            <person name="Taylor K."/>
            <person name="Taylor R.G."/>
            <person name="Tivey A."/>
            <person name="Walsh S.V."/>
            <person name="Warren T."/>
            <person name="Whitehead S."/>
            <person name="Woodward J.R."/>
            <person name="Volckaert G."/>
            <person name="Aert R."/>
            <person name="Robben J."/>
            <person name="Grymonprez B."/>
            <person name="Weltjens I."/>
            <person name="Vanstreels E."/>
            <person name="Rieger M."/>
            <person name="Schaefer M."/>
            <person name="Mueller-Auer S."/>
            <person name="Gabel C."/>
            <person name="Fuchs M."/>
            <person name="Duesterhoeft A."/>
            <person name="Fritzc C."/>
            <person name="Holzer E."/>
            <person name="Moestl D."/>
            <person name="Hilbert H."/>
            <person name="Borzym K."/>
            <person name="Langer I."/>
            <person name="Beck A."/>
            <person name="Lehrach H."/>
            <person name="Reinhardt R."/>
            <person name="Pohl T.M."/>
            <person name="Eger P."/>
            <person name="Zimmermann W."/>
            <person name="Wedler H."/>
            <person name="Wambutt R."/>
            <person name="Purnelle B."/>
            <person name="Goffeau A."/>
            <person name="Cadieu E."/>
            <person name="Dreano S."/>
            <person name="Gloux S."/>
            <person name="Lelaure V."/>
            <person name="Mottier S."/>
            <person name="Galibert F."/>
            <person name="Aves S.J."/>
            <person name="Xiang Z."/>
            <person name="Hunt C."/>
            <person name="Moore K."/>
            <person name="Hurst S.M."/>
            <person name="Lucas M."/>
            <person name="Rochet M."/>
            <person name="Gaillardin C."/>
            <person name="Tallada V.A."/>
            <person name="Garzon A."/>
            <person name="Thode G."/>
            <person name="Daga R.R."/>
            <person name="Cruzado L."/>
            <person name="Jimenez J."/>
            <person name="Sanchez M."/>
            <person name="del Rey F."/>
            <person name="Benito J."/>
            <person name="Dominguez A."/>
            <person name="Revuelta J.L."/>
            <person name="Moreno S."/>
            <person name="Armstrong J."/>
            <person name="Forsburg S.L."/>
            <person name="Cerutti L."/>
            <person name="Lowe T."/>
            <person name="McCombie W.R."/>
            <person name="Paulsen I."/>
            <person name="Potashkin J."/>
            <person name="Shpakovski G.V."/>
            <person name="Ussery D."/>
            <person name="Barrell B.G."/>
            <person name="Nurse P."/>
        </authorList>
    </citation>
    <scope>NUCLEOTIDE SEQUENCE [LARGE SCALE GENOMIC DNA]</scope>
    <source>
        <strain>972 / ATCC 24843</strain>
    </source>
</reference>
<reference key="3">
    <citation type="journal article" date="2003" name="Biosci. Biotechnol. Biochem.">
        <title>Salt stress induces the expression of Schizosaccharomyces pombe och1+, which encodes an initiation-specific alpha-1,6-mannosyltransferase for N-linked outer chain synthesis of cell wall mannoproteins.</title>
        <authorList>
            <person name="Yamamoto K."/>
            <person name="Okamoto M."/>
            <person name="Yoko-o T."/>
            <person name="Jigami Y."/>
        </authorList>
    </citation>
    <scope>FUNCTION</scope>
</reference>
<evidence type="ECO:0000250" key="1">
    <source>
        <dbReference type="UniProtKB" id="P31755"/>
    </source>
</evidence>
<evidence type="ECO:0000255" key="2"/>
<evidence type="ECO:0000269" key="3">
    <source>
    </source>
</evidence>
<evidence type="ECO:0000269" key="4">
    <source>
    </source>
</evidence>
<evidence type="ECO:0000303" key="5">
    <source>
    </source>
</evidence>
<evidence type="ECO:0000305" key="6"/>
<evidence type="ECO:0000312" key="7">
    <source>
        <dbReference type="PomBase" id="SPAC1006.05c"/>
    </source>
</evidence>
<dbReference type="EC" id="2.4.1.232" evidence="3"/>
<dbReference type="EMBL" id="CU329670">
    <property type="protein sequence ID" value="CAD24818.1"/>
    <property type="molecule type" value="Genomic_DNA"/>
</dbReference>
<dbReference type="PIR" id="T50453">
    <property type="entry name" value="T50453"/>
</dbReference>
<dbReference type="RefSeq" id="NP_594852.1">
    <property type="nucleotide sequence ID" value="NM_001020281.2"/>
</dbReference>
<dbReference type="BioGRID" id="279579">
    <property type="interactions" value="6"/>
</dbReference>
<dbReference type="FunCoup" id="Q9UTR6">
    <property type="interactions" value="28"/>
</dbReference>
<dbReference type="STRING" id="284812.Q9UTR6"/>
<dbReference type="CAZy" id="GT32">
    <property type="family name" value="Glycosyltransferase Family 32"/>
</dbReference>
<dbReference type="GlyCosmos" id="Q9UTR6">
    <property type="glycosylation" value="1 site, No reported glycans"/>
</dbReference>
<dbReference type="PaxDb" id="4896-SPAC1006.05c.1"/>
<dbReference type="EnsemblFungi" id="SPAC1006.05c.1">
    <property type="protein sequence ID" value="SPAC1006.05c.1:pep"/>
    <property type="gene ID" value="SPAC1006.05c"/>
</dbReference>
<dbReference type="GeneID" id="2543147"/>
<dbReference type="KEGG" id="spo:2543147"/>
<dbReference type="PomBase" id="SPAC1006.05c">
    <property type="gene designation" value="och1"/>
</dbReference>
<dbReference type="VEuPathDB" id="FungiDB:SPAC1006.05c"/>
<dbReference type="eggNOG" id="ENOG502QW2I">
    <property type="taxonomic scope" value="Eukaryota"/>
</dbReference>
<dbReference type="HOGENOM" id="CLU_022381_5_0_1"/>
<dbReference type="InParanoid" id="Q9UTR6"/>
<dbReference type="OMA" id="WNDYYAR"/>
<dbReference type="PhylomeDB" id="Q9UTR6"/>
<dbReference type="BRENDA" id="2.4.1.232">
    <property type="organism ID" value="5613"/>
</dbReference>
<dbReference type="PRO" id="PR:Q9UTR6"/>
<dbReference type="Proteomes" id="UP000002485">
    <property type="component" value="Chromosome I"/>
</dbReference>
<dbReference type="GO" id="GO:0005789">
    <property type="term" value="C:endoplasmic reticulum membrane"/>
    <property type="evidence" value="ECO:0007669"/>
    <property type="project" value="UniProtKB-SubCell"/>
</dbReference>
<dbReference type="GO" id="GO:0005794">
    <property type="term" value="C:Golgi apparatus"/>
    <property type="evidence" value="ECO:0000314"/>
    <property type="project" value="PomBase"/>
</dbReference>
<dbReference type="GO" id="GO:0000136">
    <property type="term" value="C:mannan polymerase complex"/>
    <property type="evidence" value="ECO:0000318"/>
    <property type="project" value="GO_Central"/>
</dbReference>
<dbReference type="GO" id="GO:0140497">
    <property type="term" value="C:mannan polymerase II complex"/>
    <property type="evidence" value="ECO:0000266"/>
    <property type="project" value="PomBase"/>
</dbReference>
<dbReference type="GO" id="GO:0000009">
    <property type="term" value="F:alpha-1,6-mannosyltransferase activity"/>
    <property type="evidence" value="ECO:0000314"/>
    <property type="project" value="UniProtKB"/>
</dbReference>
<dbReference type="GO" id="GO:0033164">
    <property type="term" value="F:glycolipid 1,6-alpha-mannosyltransferase activity"/>
    <property type="evidence" value="ECO:0000314"/>
    <property type="project" value="PomBase"/>
</dbReference>
<dbReference type="GO" id="GO:0000030">
    <property type="term" value="F:mannosyltransferase activity"/>
    <property type="evidence" value="ECO:0000315"/>
    <property type="project" value="PomBase"/>
</dbReference>
<dbReference type="GO" id="GO:0000032">
    <property type="term" value="P:cell wall mannoprotein biosynthetic process"/>
    <property type="evidence" value="ECO:0000315"/>
    <property type="project" value="PomBase"/>
</dbReference>
<dbReference type="GO" id="GO:0009101">
    <property type="term" value="P:glycoprotein biosynthetic process"/>
    <property type="evidence" value="ECO:0000315"/>
    <property type="project" value="UniProtKB"/>
</dbReference>
<dbReference type="GO" id="GO:0006487">
    <property type="term" value="P:protein N-linked glycosylation"/>
    <property type="evidence" value="ECO:0000315"/>
    <property type="project" value="PomBase"/>
</dbReference>
<dbReference type="GO" id="GO:0018279">
    <property type="term" value="P:protein N-linked glycosylation via asparagine"/>
    <property type="evidence" value="ECO:0000315"/>
    <property type="project" value="PomBase"/>
</dbReference>
<dbReference type="Gene3D" id="3.90.550.20">
    <property type="match status" value="1"/>
</dbReference>
<dbReference type="InterPro" id="IPR007577">
    <property type="entry name" value="GlycoTrfase_DXD_sugar-bd_CS"/>
</dbReference>
<dbReference type="InterPro" id="IPR029044">
    <property type="entry name" value="Nucleotide-diphossugar_trans"/>
</dbReference>
<dbReference type="InterPro" id="IPR039367">
    <property type="entry name" value="Och1-like"/>
</dbReference>
<dbReference type="PANTHER" id="PTHR31834">
    <property type="entry name" value="INITIATION-SPECIFIC ALPHA-1,6-MANNOSYLTRANSFERASE"/>
    <property type="match status" value="1"/>
</dbReference>
<dbReference type="PANTHER" id="PTHR31834:SF1">
    <property type="entry name" value="INITIATION-SPECIFIC ALPHA-1,6-MANNOSYLTRANSFERASE"/>
    <property type="match status" value="1"/>
</dbReference>
<dbReference type="Pfam" id="PF04488">
    <property type="entry name" value="Gly_transf_sug"/>
    <property type="match status" value="1"/>
</dbReference>
<dbReference type="SUPFAM" id="SSF53448">
    <property type="entry name" value="Nucleotide-diphospho-sugar transferases"/>
    <property type="match status" value="1"/>
</dbReference>
<sequence length="396" mass="45930">MLRLRLRSIVIGAAIAGSILLLFNHGSIEGMEDLTEISMLEDYTPEAANKDYVGQQEEEELLYDQPSYIEEEEDPDLEAYLSDLEREELEHSLEELDEENNYKLHLRYSFSQLQDFDEENEAVHMIVPKDTYEFEVPYHADIPKLIWQTSKDPFDREVMKYTRFWRINHPSYSHAVLDDEQSKALVISSFGDSSVSKISQAYAMMPLPVLKADFFRYLVLLAKGGIYSDIDTAPLKHINNWIPREYRKRNIRLIVGIEADPDRPDWNDYYARRVQFCQWTIAAAPGHPILWELVRRITDETWKLHDSKKLSKNGESVMEWTGPGIWTDAIMDYLNWQYGPFSVENITNLEEPYLVGDVLILPITAFSPGVGHMGSKSPNDPMAYVQHFFAGSWKDD</sequence>
<gene>
    <name evidence="5" type="primary">och1</name>
    <name evidence="7" type="ORF">SPAC1006.05c</name>
</gene>
<accession>Q9UTR6</accession>
<protein>
    <recommendedName>
        <fullName>Initiation-specific alpha-1,6-mannosyltransferase</fullName>
        <ecNumber evidence="3">2.4.1.232</ecNumber>
    </recommendedName>
</protein>
<keyword id="KW-0256">Endoplasmic reticulum</keyword>
<keyword id="KW-0325">Glycoprotein</keyword>
<keyword id="KW-0328">Glycosyltransferase</keyword>
<keyword id="KW-0333">Golgi apparatus</keyword>
<keyword id="KW-0472">Membrane</keyword>
<keyword id="KW-1185">Reference proteome</keyword>
<keyword id="KW-0735">Signal-anchor</keyword>
<keyword id="KW-0808">Transferase</keyword>
<keyword id="KW-0812">Transmembrane</keyword>
<keyword id="KW-1133">Transmembrane helix</keyword>
<name>OCH1_SCHPO</name>
<organism>
    <name type="scientific">Schizosaccharomyces pombe (strain 972 / ATCC 24843)</name>
    <name type="common">Fission yeast</name>
    <dbReference type="NCBI Taxonomy" id="284812"/>
    <lineage>
        <taxon>Eukaryota</taxon>
        <taxon>Fungi</taxon>
        <taxon>Dikarya</taxon>
        <taxon>Ascomycota</taxon>
        <taxon>Taphrinomycotina</taxon>
        <taxon>Schizosaccharomycetes</taxon>
        <taxon>Schizosaccharomycetales</taxon>
        <taxon>Schizosaccharomycetaceae</taxon>
        <taxon>Schizosaccharomyces</taxon>
    </lineage>
</organism>
<comment type="function">
    <text evidence="3 4">Mannosyltransferase involved in outer chain elongation of asparagine-linked oligosaccharides of the type Man(9)GlcNAc(2). May otherwise add the first alpha-1,6-mannose to the Man(8)GlcNAc(2) core oligosaccharide from the ER. Represents the first enzymatic event required for synthesis of outer chain mannose linkages on yeast secretory proteins.</text>
</comment>
<comment type="catalytic activity">
    <reaction evidence="3">
        <text>Transfers an alpha-D-mannosyl residue from GDP-mannose into lipid-linked oligosaccharide, forming an alpha-(1-&gt;6)-D-mannosyl-D-mannose linkage.</text>
        <dbReference type="EC" id="2.4.1.232"/>
    </reaction>
</comment>
<comment type="cofactor">
    <cofactor evidence="1">
        <name>Mn(2+)</name>
        <dbReference type="ChEBI" id="CHEBI:29035"/>
    </cofactor>
</comment>
<comment type="subcellular location">
    <subcellularLocation>
        <location evidence="1">Endoplasmic reticulum membrane</location>
        <topology evidence="1">Single-pass type II membrane protein</topology>
    </subcellularLocation>
    <subcellularLocation>
        <location evidence="1">Golgi apparatus membrane</location>
        <topology evidence="1">Single-pass type II membrane protein</topology>
    </subcellularLocation>
    <text evidence="1">Is recycled between the trans-Golgi network and a late compartment of the endoplasmic reticulum.</text>
</comment>
<comment type="domain">
    <text evidence="1">The conserved DXD motif is involved in enzyme activity.</text>
</comment>
<comment type="similarity">
    <text evidence="6">Belongs to the glycosyltransferase 32 family.</text>
</comment>
<feature type="chain" id="PRO_0000080562" description="Initiation-specific alpha-1,6-mannosyltransferase">
    <location>
        <begin position="1"/>
        <end position="396"/>
    </location>
</feature>
<feature type="topological domain" description="Cytoplasmic" evidence="1">
    <location>
        <begin position="1"/>
        <end position="7"/>
    </location>
</feature>
<feature type="transmembrane region" description="Helical; Signal-anchor for type II membrane protein" evidence="2">
    <location>
        <begin position="8"/>
        <end position="28"/>
    </location>
</feature>
<feature type="topological domain" description="Lumenal" evidence="1">
    <location>
        <begin position="29"/>
        <end position="396"/>
    </location>
</feature>
<feature type="short sequence motif" description="DXD motif" evidence="1">
    <location>
        <begin position="229"/>
        <end position="231"/>
    </location>
</feature>
<feature type="glycosylation site" description="N-linked (GlcNAc...) asparagine" evidence="2">
    <location>
        <position position="345"/>
    </location>
</feature>